<gene>
    <name evidence="1" type="primary">glpK</name>
    <name type="ordered locus">BT9727_0947</name>
</gene>
<dbReference type="EC" id="2.7.1.30" evidence="1"/>
<dbReference type="EMBL" id="AE017355">
    <property type="protein sequence ID" value="AAT62361.1"/>
    <property type="molecule type" value="Genomic_DNA"/>
</dbReference>
<dbReference type="RefSeq" id="WP_000759995.1">
    <property type="nucleotide sequence ID" value="NC_005957.1"/>
</dbReference>
<dbReference type="RefSeq" id="YP_035286.1">
    <property type="nucleotide sequence ID" value="NC_005957.1"/>
</dbReference>
<dbReference type="SMR" id="Q6HMD5"/>
<dbReference type="KEGG" id="btk:BT9727_0947"/>
<dbReference type="PATRIC" id="fig|281309.8.peg.997"/>
<dbReference type="HOGENOM" id="CLU_009281_2_3_9"/>
<dbReference type="UniPathway" id="UPA00618">
    <property type="reaction ID" value="UER00672"/>
</dbReference>
<dbReference type="Proteomes" id="UP000001301">
    <property type="component" value="Chromosome"/>
</dbReference>
<dbReference type="GO" id="GO:0005829">
    <property type="term" value="C:cytosol"/>
    <property type="evidence" value="ECO:0007669"/>
    <property type="project" value="TreeGrafter"/>
</dbReference>
<dbReference type="GO" id="GO:0005524">
    <property type="term" value="F:ATP binding"/>
    <property type="evidence" value="ECO:0007669"/>
    <property type="project" value="UniProtKB-UniRule"/>
</dbReference>
<dbReference type="GO" id="GO:0004370">
    <property type="term" value="F:glycerol kinase activity"/>
    <property type="evidence" value="ECO:0000250"/>
    <property type="project" value="UniProtKB"/>
</dbReference>
<dbReference type="GO" id="GO:0019563">
    <property type="term" value="P:glycerol catabolic process"/>
    <property type="evidence" value="ECO:0007669"/>
    <property type="project" value="UniProtKB-UniRule"/>
</dbReference>
<dbReference type="GO" id="GO:0006071">
    <property type="term" value="P:glycerol metabolic process"/>
    <property type="evidence" value="ECO:0000250"/>
    <property type="project" value="UniProtKB"/>
</dbReference>
<dbReference type="GO" id="GO:0006072">
    <property type="term" value="P:glycerol-3-phosphate metabolic process"/>
    <property type="evidence" value="ECO:0007669"/>
    <property type="project" value="InterPro"/>
</dbReference>
<dbReference type="CDD" id="cd07786">
    <property type="entry name" value="FGGY_EcGK_like"/>
    <property type="match status" value="1"/>
</dbReference>
<dbReference type="FunFam" id="3.30.420.40:FF:000007">
    <property type="entry name" value="Glycerol kinase"/>
    <property type="match status" value="1"/>
</dbReference>
<dbReference type="FunFam" id="3.30.420.40:FF:000008">
    <property type="entry name" value="Glycerol kinase"/>
    <property type="match status" value="1"/>
</dbReference>
<dbReference type="Gene3D" id="3.30.420.40">
    <property type="match status" value="2"/>
</dbReference>
<dbReference type="HAMAP" id="MF_00186">
    <property type="entry name" value="Glycerol_kin"/>
    <property type="match status" value="1"/>
</dbReference>
<dbReference type="InterPro" id="IPR043129">
    <property type="entry name" value="ATPase_NBD"/>
</dbReference>
<dbReference type="InterPro" id="IPR000577">
    <property type="entry name" value="Carb_kinase_FGGY"/>
</dbReference>
<dbReference type="InterPro" id="IPR018483">
    <property type="entry name" value="Carb_kinase_FGGY_CS"/>
</dbReference>
<dbReference type="InterPro" id="IPR018485">
    <property type="entry name" value="FGGY_C"/>
</dbReference>
<dbReference type="InterPro" id="IPR018484">
    <property type="entry name" value="FGGY_N"/>
</dbReference>
<dbReference type="InterPro" id="IPR005999">
    <property type="entry name" value="Glycerol_kin"/>
</dbReference>
<dbReference type="NCBIfam" id="TIGR01311">
    <property type="entry name" value="glycerol_kin"/>
    <property type="match status" value="1"/>
</dbReference>
<dbReference type="NCBIfam" id="NF000756">
    <property type="entry name" value="PRK00047.1"/>
    <property type="match status" value="1"/>
</dbReference>
<dbReference type="PANTHER" id="PTHR10196:SF69">
    <property type="entry name" value="GLYCEROL KINASE"/>
    <property type="match status" value="1"/>
</dbReference>
<dbReference type="PANTHER" id="PTHR10196">
    <property type="entry name" value="SUGAR KINASE"/>
    <property type="match status" value="1"/>
</dbReference>
<dbReference type="Pfam" id="PF02782">
    <property type="entry name" value="FGGY_C"/>
    <property type="match status" value="1"/>
</dbReference>
<dbReference type="Pfam" id="PF00370">
    <property type="entry name" value="FGGY_N"/>
    <property type="match status" value="1"/>
</dbReference>
<dbReference type="PIRSF" id="PIRSF000538">
    <property type="entry name" value="GlpK"/>
    <property type="match status" value="1"/>
</dbReference>
<dbReference type="SUPFAM" id="SSF53067">
    <property type="entry name" value="Actin-like ATPase domain"/>
    <property type="match status" value="2"/>
</dbReference>
<dbReference type="PROSITE" id="PS00933">
    <property type="entry name" value="FGGY_KINASES_1"/>
    <property type="match status" value="1"/>
</dbReference>
<dbReference type="PROSITE" id="PS00445">
    <property type="entry name" value="FGGY_KINASES_2"/>
    <property type="match status" value="1"/>
</dbReference>
<sequence length="496" mass="55044">MKKYILSLDQGTTSSRAILFNKKGEIVHSAQKEFTQHFPKPGWVEHNAQEIWGSILAVIATCLSEADVKPEQIAGIGITNQRETAVVWDKTTGKPIYNAIVWQSRQTAEICDELKEKGYSEMVREKTGLLIDAYFSGTKVKWILDNVEGAREKAENGDLLFGTIDTWLVWKLSGGKAHVTDYSNASRTLMFNIHDLQWDDELLDMLTVPKSMLPEVRPSSEVYGETIDYHFFGQNVPIAGVAGDQQAALFGQACFGEGMAKNTYGTGCFMLMNTGEKAVASEHGLLTTIAWGIDGKVNYALEGSIFVAGSAIQWLRDGMRMFKDASESEVYASRVESTDGVYVVPAFVGLGTPYWDSEVRGAMFGVTRGTTKEHFIRATLESLAYQTKDVLCAMEADSGIELKTLRVDGGAVKNNFLMKFQSDILDVPVERPVINETTALGAAYLAGLAVGYWKNQDEIKEQWHMDKRFEPTMEAETSEELYAGWKKAIEATKAFK</sequence>
<reference key="1">
    <citation type="journal article" date="2006" name="J. Bacteriol.">
        <title>Pathogenomic sequence analysis of Bacillus cereus and Bacillus thuringiensis isolates closely related to Bacillus anthracis.</title>
        <authorList>
            <person name="Han C.S."/>
            <person name="Xie G."/>
            <person name="Challacombe J.F."/>
            <person name="Altherr M.R."/>
            <person name="Bhotika S.S."/>
            <person name="Bruce D."/>
            <person name="Campbell C.S."/>
            <person name="Campbell M.L."/>
            <person name="Chen J."/>
            <person name="Chertkov O."/>
            <person name="Cleland C."/>
            <person name="Dimitrijevic M."/>
            <person name="Doggett N.A."/>
            <person name="Fawcett J.J."/>
            <person name="Glavina T."/>
            <person name="Goodwin L.A."/>
            <person name="Hill K.K."/>
            <person name="Hitchcock P."/>
            <person name="Jackson P.J."/>
            <person name="Keim P."/>
            <person name="Kewalramani A.R."/>
            <person name="Longmire J."/>
            <person name="Lucas S."/>
            <person name="Malfatti S."/>
            <person name="McMurry K."/>
            <person name="Meincke L.J."/>
            <person name="Misra M."/>
            <person name="Moseman B.L."/>
            <person name="Mundt M."/>
            <person name="Munk A.C."/>
            <person name="Okinaka R.T."/>
            <person name="Parson-Quintana B."/>
            <person name="Reilly L.P."/>
            <person name="Richardson P."/>
            <person name="Robinson D.L."/>
            <person name="Rubin E."/>
            <person name="Saunders E."/>
            <person name="Tapia R."/>
            <person name="Tesmer J.G."/>
            <person name="Thayer N."/>
            <person name="Thompson L.S."/>
            <person name="Tice H."/>
            <person name="Ticknor L.O."/>
            <person name="Wills P.L."/>
            <person name="Brettin T.S."/>
            <person name="Gilna P."/>
        </authorList>
    </citation>
    <scope>NUCLEOTIDE SEQUENCE [LARGE SCALE GENOMIC DNA]</scope>
    <source>
        <strain>97-27</strain>
    </source>
</reference>
<feature type="chain" id="PRO_1000020701" description="Glycerol kinase">
    <location>
        <begin position="1"/>
        <end position="496"/>
    </location>
</feature>
<feature type="binding site" evidence="1">
    <location>
        <position position="12"/>
    </location>
    <ligand>
        <name>ADP</name>
        <dbReference type="ChEBI" id="CHEBI:456216"/>
    </ligand>
</feature>
<feature type="binding site" evidence="1">
    <location>
        <position position="12"/>
    </location>
    <ligand>
        <name>ATP</name>
        <dbReference type="ChEBI" id="CHEBI:30616"/>
    </ligand>
</feature>
<feature type="binding site" evidence="1">
    <location>
        <position position="12"/>
    </location>
    <ligand>
        <name>sn-glycerol 3-phosphate</name>
        <dbReference type="ChEBI" id="CHEBI:57597"/>
    </ligand>
</feature>
<feature type="binding site" evidence="1">
    <location>
        <position position="13"/>
    </location>
    <ligand>
        <name>ATP</name>
        <dbReference type="ChEBI" id="CHEBI:30616"/>
    </ligand>
</feature>
<feature type="binding site" evidence="1">
    <location>
        <position position="14"/>
    </location>
    <ligand>
        <name>ATP</name>
        <dbReference type="ChEBI" id="CHEBI:30616"/>
    </ligand>
</feature>
<feature type="binding site" evidence="1">
    <location>
        <position position="16"/>
    </location>
    <ligand>
        <name>ADP</name>
        <dbReference type="ChEBI" id="CHEBI:456216"/>
    </ligand>
</feature>
<feature type="binding site" evidence="1">
    <location>
        <position position="82"/>
    </location>
    <ligand>
        <name>glycerol</name>
        <dbReference type="ChEBI" id="CHEBI:17754"/>
    </ligand>
</feature>
<feature type="binding site" evidence="1">
    <location>
        <position position="82"/>
    </location>
    <ligand>
        <name>sn-glycerol 3-phosphate</name>
        <dbReference type="ChEBI" id="CHEBI:57597"/>
    </ligand>
</feature>
<feature type="binding site" evidence="1">
    <location>
        <position position="83"/>
    </location>
    <ligand>
        <name>glycerol</name>
        <dbReference type="ChEBI" id="CHEBI:17754"/>
    </ligand>
</feature>
<feature type="binding site" evidence="1">
    <location>
        <position position="83"/>
    </location>
    <ligand>
        <name>sn-glycerol 3-phosphate</name>
        <dbReference type="ChEBI" id="CHEBI:57597"/>
    </ligand>
</feature>
<feature type="binding site" evidence="1">
    <location>
        <position position="134"/>
    </location>
    <ligand>
        <name>glycerol</name>
        <dbReference type="ChEBI" id="CHEBI:17754"/>
    </ligand>
</feature>
<feature type="binding site" evidence="1">
    <location>
        <position position="134"/>
    </location>
    <ligand>
        <name>sn-glycerol 3-phosphate</name>
        <dbReference type="ChEBI" id="CHEBI:57597"/>
    </ligand>
</feature>
<feature type="binding site" evidence="1">
    <location>
        <position position="244"/>
    </location>
    <ligand>
        <name>glycerol</name>
        <dbReference type="ChEBI" id="CHEBI:17754"/>
    </ligand>
</feature>
<feature type="binding site" evidence="1">
    <location>
        <position position="244"/>
    </location>
    <ligand>
        <name>sn-glycerol 3-phosphate</name>
        <dbReference type="ChEBI" id="CHEBI:57597"/>
    </ligand>
</feature>
<feature type="binding site" evidence="1">
    <location>
        <position position="245"/>
    </location>
    <ligand>
        <name>glycerol</name>
        <dbReference type="ChEBI" id="CHEBI:17754"/>
    </ligand>
</feature>
<feature type="binding site" evidence="1">
    <location>
        <position position="266"/>
    </location>
    <ligand>
        <name>ADP</name>
        <dbReference type="ChEBI" id="CHEBI:456216"/>
    </ligand>
</feature>
<feature type="binding site" evidence="1">
    <location>
        <position position="266"/>
    </location>
    <ligand>
        <name>ATP</name>
        <dbReference type="ChEBI" id="CHEBI:30616"/>
    </ligand>
</feature>
<feature type="binding site" evidence="1">
    <location>
        <position position="309"/>
    </location>
    <ligand>
        <name>ADP</name>
        <dbReference type="ChEBI" id="CHEBI:456216"/>
    </ligand>
</feature>
<feature type="binding site" evidence="1">
    <location>
        <position position="309"/>
    </location>
    <ligand>
        <name>ATP</name>
        <dbReference type="ChEBI" id="CHEBI:30616"/>
    </ligand>
</feature>
<feature type="binding site" evidence="1">
    <location>
        <position position="313"/>
    </location>
    <ligand>
        <name>ATP</name>
        <dbReference type="ChEBI" id="CHEBI:30616"/>
    </ligand>
</feature>
<feature type="binding site" evidence="1">
    <location>
        <position position="410"/>
    </location>
    <ligand>
        <name>ADP</name>
        <dbReference type="ChEBI" id="CHEBI:456216"/>
    </ligand>
</feature>
<feature type="binding site" evidence="1">
    <location>
        <position position="410"/>
    </location>
    <ligand>
        <name>ATP</name>
        <dbReference type="ChEBI" id="CHEBI:30616"/>
    </ligand>
</feature>
<feature type="binding site" evidence="1">
    <location>
        <position position="414"/>
    </location>
    <ligand>
        <name>ADP</name>
        <dbReference type="ChEBI" id="CHEBI:456216"/>
    </ligand>
</feature>
<feature type="modified residue" description="Phosphohistidine; by HPr" evidence="1">
    <location>
        <position position="230"/>
    </location>
</feature>
<evidence type="ECO:0000255" key="1">
    <source>
        <dbReference type="HAMAP-Rule" id="MF_00186"/>
    </source>
</evidence>
<comment type="function">
    <text evidence="1">Key enzyme in the regulation of glycerol uptake and metabolism. Catalyzes the phosphorylation of glycerol to yield sn-glycerol 3-phosphate.</text>
</comment>
<comment type="catalytic activity">
    <reaction evidence="1">
        <text>glycerol + ATP = sn-glycerol 3-phosphate + ADP + H(+)</text>
        <dbReference type="Rhea" id="RHEA:21644"/>
        <dbReference type="ChEBI" id="CHEBI:15378"/>
        <dbReference type="ChEBI" id="CHEBI:17754"/>
        <dbReference type="ChEBI" id="CHEBI:30616"/>
        <dbReference type="ChEBI" id="CHEBI:57597"/>
        <dbReference type="ChEBI" id="CHEBI:456216"/>
        <dbReference type="EC" id="2.7.1.30"/>
    </reaction>
</comment>
<comment type="activity regulation">
    <text evidence="1">Activated by phosphorylation and inhibited by fructose 1,6-bisphosphate (FBP).</text>
</comment>
<comment type="pathway">
    <text evidence="1">Polyol metabolism; glycerol degradation via glycerol kinase pathway; sn-glycerol 3-phosphate from glycerol: step 1/1.</text>
</comment>
<comment type="subunit">
    <text evidence="1">Homotetramer and homodimer (in equilibrium).</text>
</comment>
<comment type="PTM">
    <text evidence="1">The phosphoenolpyruvate-dependent sugar phosphotransferase system (PTS), including enzyme I, and histidine-containing protein (HPr) are required for the phosphorylation, which leads to the activation of the enzyme.</text>
</comment>
<comment type="similarity">
    <text evidence="1">Belongs to the FGGY kinase family.</text>
</comment>
<accession>Q6HMD5</accession>
<organism>
    <name type="scientific">Bacillus thuringiensis subsp. konkukian (strain 97-27)</name>
    <dbReference type="NCBI Taxonomy" id="281309"/>
    <lineage>
        <taxon>Bacteria</taxon>
        <taxon>Bacillati</taxon>
        <taxon>Bacillota</taxon>
        <taxon>Bacilli</taxon>
        <taxon>Bacillales</taxon>
        <taxon>Bacillaceae</taxon>
        <taxon>Bacillus</taxon>
        <taxon>Bacillus cereus group</taxon>
    </lineage>
</organism>
<name>GLPK_BACHK</name>
<proteinExistence type="inferred from homology"/>
<keyword id="KW-0067">ATP-binding</keyword>
<keyword id="KW-0319">Glycerol metabolism</keyword>
<keyword id="KW-0418">Kinase</keyword>
<keyword id="KW-0547">Nucleotide-binding</keyword>
<keyword id="KW-0597">Phosphoprotein</keyword>
<keyword id="KW-0808">Transferase</keyword>
<protein>
    <recommendedName>
        <fullName evidence="1">Glycerol kinase</fullName>
        <ecNumber evidence="1">2.7.1.30</ecNumber>
    </recommendedName>
    <alternativeName>
        <fullName evidence="1">ATP:glycerol 3-phosphotransferase</fullName>
    </alternativeName>
    <alternativeName>
        <fullName evidence="1">Glycerokinase</fullName>
        <shortName evidence="1">GK</shortName>
    </alternativeName>
</protein>